<accession>A4TSF7</accession>
<gene>
    <name evidence="1" type="primary">dtd</name>
    <name type="ordered locus">YPDSF_3876</name>
</gene>
<dbReference type="EC" id="3.1.1.96" evidence="1"/>
<dbReference type="EMBL" id="CP000668">
    <property type="protein sequence ID" value="ABP42219.1"/>
    <property type="molecule type" value="Genomic_DNA"/>
</dbReference>
<dbReference type="RefSeq" id="WP_002209009.1">
    <property type="nucleotide sequence ID" value="NZ_CP009715.1"/>
</dbReference>
<dbReference type="SMR" id="A4TSF7"/>
<dbReference type="GeneID" id="57974561"/>
<dbReference type="KEGG" id="ypp:YPDSF_3876"/>
<dbReference type="PATRIC" id="fig|386656.14.peg.642"/>
<dbReference type="GO" id="GO:0005737">
    <property type="term" value="C:cytoplasm"/>
    <property type="evidence" value="ECO:0007669"/>
    <property type="project" value="UniProtKB-SubCell"/>
</dbReference>
<dbReference type="GO" id="GO:0051500">
    <property type="term" value="F:D-tyrosyl-tRNA(Tyr) deacylase activity"/>
    <property type="evidence" value="ECO:0007669"/>
    <property type="project" value="TreeGrafter"/>
</dbReference>
<dbReference type="GO" id="GO:0106026">
    <property type="term" value="F:Gly-tRNA(Ala) deacylase activity"/>
    <property type="evidence" value="ECO:0007669"/>
    <property type="project" value="UniProtKB-UniRule"/>
</dbReference>
<dbReference type="GO" id="GO:0043908">
    <property type="term" value="F:Ser(Gly)-tRNA(Ala) hydrolase activity"/>
    <property type="evidence" value="ECO:0007669"/>
    <property type="project" value="UniProtKB-UniRule"/>
</dbReference>
<dbReference type="GO" id="GO:0000049">
    <property type="term" value="F:tRNA binding"/>
    <property type="evidence" value="ECO:0007669"/>
    <property type="project" value="UniProtKB-UniRule"/>
</dbReference>
<dbReference type="GO" id="GO:0019478">
    <property type="term" value="P:D-amino acid catabolic process"/>
    <property type="evidence" value="ECO:0007669"/>
    <property type="project" value="UniProtKB-UniRule"/>
</dbReference>
<dbReference type="CDD" id="cd00563">
    <property type="entry name" value="Dtyr_deacylase"/>
    <property type="match status" value="1"/>
</dbReference>
<dbReference type="FunFam" id="3.50.80.10:FF:000001">
    <property type="entry name" value="D-aminoacyl-tRNA deacylase"/>
    <property type="match status" value="1"/>
</dbReference>
<dbReference type="Gene3D" id="3.50.80.10">
    <property type="entry name" value="D-tyrosyl-tRNA(Tyr) deacylase"/>
    <property type="match status" value="1"/>
</dbReference>
<dbReference type="HAMAP" id="MF_00518">
    <property type="entry name" value="Deacylase_Dtd"/>
    <property type="match status" value="1"/>
</dbReference>
<dbReference type="InterPro" id="IPR003732">
    <property type="entry name" value="Daa-tRNA_deacyls_DTD"/>
</dbReference>
<dbReference type="InterPro" id="IPR023509">
    <property type="entry name" value="DTD-like_sf"/>
</dbReference>
<dbReference type="NCBIfam" id="TIGR00256">
    <property type="entry name" value="D-aminoacyl-tRNA deacylase"/>
    <property type="match status" value="1"/>
</dbReference>
<dbReference type="PANTHER" id="PTHR10472:SF5">
    <property type="entry name" value="D-AMINOACYL-TRNA DEACYLASE 1"/>
    <property type="match status" value="1"/>
</dbReference>
<dbReference type="PANTHER" id="PTHR10472">
    <property type="entry name" value="D-TYROSYL-TRNA TYR DEACYLASE"/>
    <property type="match status" value="1"/>
</dbReference>
<dbReference type="Pfam" id="PF02580">
    <property type="entry name" value="Tyr_Deacylase"/>
    <property type="match status" value="1"/>
</dbReference>
<dbReference type="SUPFAM" id="SSF69500">
    <property type="entry name" value="DTD-like"/>
    <property type="match status" value="1"/>
</dbReference>
<reference key="1">
    <citation type="submission" date="2007-02" db="EMBL/GenBank/DDBJ databases">
        <title>Complete sequence of chromosome of Yersinia pestis Pestoides F.</title>
        <authorList>
            <consortium name="US DOE Joint Genome Institute"/>
            <person name="Copeland A."/>
            <person name="Lucas S."/>
            <person name="Lapidus A."/>
            <person name="Barry K."/>
            <person name="Detter J.C."/>
            <person name="Glavina del Rio T."/>
            <person name="Hammon N."/>
            <person name="Israni S."/>
            <person name="Dalin E."/>
            <person name="Tice H."/>
            <person name="Pitluck S."/>
            <person name="Di Bartolo G."/>
            <person name="Chain P."/>
            <person name="Malfatti S."/>
            <person name="Shin M."/>
            <person name="Vergez L."/>
            <person name="Schmutz J."/>
            <person name="Larimer F."/>
            <person name="Land M."/>
            <person name="Hauser L."/>
            <person name="Worsham P."/>
            <person name="Chu M."/>
            <person name="Bearden S."/>
            <person name="Garcia E."/>
            <person name="Richardson P."/>
        </authorList>
    </citation>
    <scope>NUCLEOTIDE SEQUENCE [LARGE SCALE GENOMIC DNA]</scope>
    <source>
        <strain>Pestoides F</strain>
    </source>
</reference>
<proteinExistence type="inferred from homology"/>
<name>DTD_YERPP</name>
<feature type="chain" id="PRO_1000050905" description="D-aminoacyl-tRNA deacylase">
    <location>
        <begin position="1"/>
        <end position="145"/>
    </location>
</feature>
<feature type="short sequence motif" description="Gly-cisPro motif, important for rejection of L-amino acids" evidence="1">
    <location>
        <begin position="137"/>
        <end position="138"/>
    </location>
</feature>
<keyword id="KW-0963">Cytoplasm</keyword>
<keyword id="KW-0378">Hydrolase</keyword>
<keyword id="KW-0694">RNA-binding</keyword>
<keyword id="KW-0820">tRNA-binding</keyword>
<organism>
    <name type="scientific">Yersinia pestis (strain Pestoides F)</name>
    <dbReference type="NCBI Taxonomy" id="386656"/>
    <lineage>
        <taxon>Bacteria</taxon>
        <taxon>Pseudomonadati</taxon>
        <taxon>Pseudomonadota</taxon>
        <taxon>Gammaproteobacteria</taxon>
        <taxon>Enterobacterales</taxon>
        <taxon>Yersiniaceae</taxon>
        <taxon>Yersinia</taxon>
    </lineage>
</organism>
<sequence>MIALIQRALSASVVVEGNIVGEIGPGLLVLLGVEQGDTEQKAQRLCERVLGYRIFSDENDKMNLNVQQAGGSVLVVSQFTLVADTQKGMRPSFSRGAIPQEADRLYQYFVAQCRERGVKTETGLFAADMKVSLVNDGPVTFWLQV</sequence>
<evidence type="ECO:0000255" key="1">
    <source>
        <dbReference type="HAMAP-Rule" id="MF_00518"/>
    </source>
</evidence>
<comment type="function">
    <text evidence="1">An aminoacyl-tRNA editing enzyme that deacylates mischarged D-aminoacyl-tRNAs. Also deacylates mischarged glycyl-tRNA(Ala), protecting cells against glycine mischarging by AlaRS. Acts via tRNA-based rather than protein-based catalysis; rejects L-amino acids rather than detecting D-amino acids in the active site. By recycling D-aminoacyl-tRNA to D-amino acids and free tRNA molecules, this enzyme counteracts the toxicity associated with the formation of D-aminoacyl-tRNA entities in vivo and helps enforce protein L-homochirality.</text>
</comment>
<comment type="catalytic activity">
    <reaction evidence="1">
        <text>glycyl-tRNA(Ala) + H2O = tRNA(Ala) + glycine + H(+)</text>
        <dbReference type="Rhea" id="RHEA:53744"/>
        <dbReference type="Rhea" id="RHEA-COMP:9657"/>
        <dbReference type="Rhea" id="RHEA-COMP:13640"/>
        <dbReference type="ChEBI" id="CHEBI:15377"/>
        <dbReference type="ChEBI" id="CHEBI:15378"/>
        <dbReference type="ChEBI" id="CHEBI:57305"/>
        <dbReference type="ChEBI" id="CHEBI:78442"/>
        <dbReference type="ChEBI" id="CHEBI:78522"/>
        <dbReference type="EC" id="3.1.1.96"/>
    </reaction>
</comment>
<comment type="catalytic activity">
    <reaction evidence="1">
        <text>a D-aminoacyl-tRNA + H2O = a tRNA + a D-alpha-amino acid + H(+)</text>
        <dbReference type="Rhea" id="RHEA:13953"/>
        <dbReference type="Rhea" id="RHEA-COMP:10123"/>
        <dbReference type="Rhea" id="RHEA-COMP:10124"/>
        <dbReference type="ChEBI" id="CHEBI:15377"/>
        <dbReference type="ChEBI" id="CHEBI:15378"/>
        <dbReference type="ChEBI" id="CHEBI:59871"/>
        <dbReference type="ChEBI" id="CHEBI:78442"/>
        <dbReference type="ChEBI" id="CHEBI:79333"/>
        <dbReference type="EC" id="3.1.1.96"/>
    </reaction>
</comment>
<comment type="subunit">
    <text evidence="1">Homodimer.</text>
</comment>
<comment type="subcellular location">
    <subcellularLocation>
        <location evidence="1">Cytoplasm</location>
    </subcellularLocation>
</comment>
<comment type="domain">
    <text evidence="1">A Gly-cisPro motif from one monomer fits into the active site of the other monomer to allow specific chiral rejection of L-amino acids.</text>
</comment>
<comment type="similarity">
    <text evidence="1">Belongs to the DTD family.</text>
</comment>
<protein>
    <recommendedName>
        <fullName evidence="1">D-aminoacyl-tRNA deacylase</fullName>
        <shortName evidence="1">DTD</shortName>
        <ecNumber evidence="1">3.1.1.96</ecNumber>
    </recommendedName>
    <alternativeName>
        <fullName evidence="1">Gly-tRNA(Ala) deacylase</fullName>
    </alternativeName>
</protein>